<organism>
    <name type="scientific">Oryza sativa subsp. japonica</name>
    <name type="common">Rice</name>
    <dbReference type="NCBI Taxonomy" id="39947"/>
    <lineage>
        <taxon>Eukaryota</taxon>
        <taxon>Viridiplantae</taxon>
        <taxon>Streptophyta</taxon>
        <taxon>Embryophyta</taxon>
        <taxon>Tracheophyta</taxon>
        <taxon>Spermatophyta</taxon>
        <taxon>Magnoliopsida</taxon>
        <taxon>Liliopsida</taxon>
        <taxon>Poales</taxon>
        <taxon>Poaceae</taxon>
        <taxon>BOP clade</taxon>
        <taxon>Oryzoideae</taxon>
        <taxon>Oryzeae</taxon>
        <taxon>Oryzinae</taxon>
        <taxon>Oryza</taxon>
        <taxon>Oryza sativa</taxon>
    </lineage>
</organism>
<comment type="function">
    <text evidence="1">Specifically deglycosylates the denatured form of N-linked glycoproteins in the cytoplasm and assists their proteasome-mediated degradation. Cleaves the beta-aspartyl-glucosamine (GlcNAc) of the glycan and the amide side chain of Asn, converting Asn to Asp. Prefers proteins containing high-mannose over those bearing complex type oligosaccharides. Can recognize misfolded proteins in the endoplasmic reticulum that are exported to the cytosol to be destroyed and deglycosylate them, while it has no activity toward native proteins. Deglycosylation is a prerequisite for subsequent proteasome-mediated degradation of some, but not all, misfolded glycoproteins (By similarity).</text>
</comment>
<comment type="catalytic activity">
    <reaction>
        <text>Hydrolysis of an N(4)-(acetyl-beta-D-glucosaminyl)asparagine residue in which the glucosamine residue may be further glycosylated, to yield a (substituted) N-acetyl-beta-D-glucosaminylamine and a peptide containing an aspartate residue.</text>
        <dbReference type="EC" id="3.5.1.52"/>
    </reaction>
</comment>
<comment type="cofactor">
    <cofactor evidence="1">
        <name>Zn(2+)</name>
        <dbReference type="ChEBI" id="CHEBI:29105"/>
    </cofactor>
    <text evidence="1">Binds 1 zinc ion per subunit.</text>
</comment>
<comment type="subcellular location">
    <subcellularLocation>
        <location evidence="1">Cytoplasm</location>
    </subcellularLocation>
</comment>
<comment type="similarity">
    <text evidence="2">Belongs to the transglutaminase-like superfamily. PNGase family.</text>
</comment>
<sequence length="447" mass="50513">MVARRFVVRQGGGGGGGGEAEEHEVEYDTEHGLDILRLQIFSLTSVPPELQKIVVEADGSVVDDGTDLEAISEGLRLVAITGEEEEAEAAAAAEAARAQEKSDEELARMIQAEEEALLLQQYSIRNDGGEEFRERVEPYMHQVLMYEDPMRQEAARKTVPMDELQEKALVSLAKEGNFSPSKDEEDHAFLLQLLFWFKQSFRWVNAPPCDSCGRETFNVGMGTALPSEIKFGANRVEIYRCNYCSSTTRFPRYNDPYKLLETRKGRCGEWANCFTFYCRSFGYEARLILDFTDHVWTECFSNLYGRWMHLDPCEGVYDNPLLYEKGWNKKLDYVIAISKDGVRDVTKRYTRKWHEVLSRRIITSEDTVSAILSSITGKYRSGLSIDGLTALENRDKKESEELSKAAYLEVDTSISLPGRQSGSVEWRKASQKCSTYILSITSGNGCG</sequence>
<keyword id="KW-0963">Cytoplasm</keyword>
<keyword id="KW-0378">Hydrolase</keyword>
<keyword id="KW-0479">Metal-binding</keyword>
<keyword id="KW-1185">Reference proteome</keyword>
<keyword id="KW-0862">Zinc</keyword>
<feature type="chain" id="PRO_0000248982" description="Peptide-N(4)-(N-acetyl-beta-glucosaminyl)asparagine amidase">
    <location>
        <begin position="1"/>
        <end position="447"/>
    </location>
</feature>
<feature type="active site" description="Nucleophile" evidence="1">
    <location>
        <position position="267"/>
    </location>
</feature>
<feature type="active site" evidence="1">
    <location>
        <position position="294"/>
    </location>
</feature>
<feature type="active site" evidence="1">
    <location>
        <position position="311"/>
    </location>
</feature>
<feature type="binding site" evidence="1">
    <location>
        <position position="209"/>
    </location>
    <ligand>
        <name>Zn(2+)</name>
        <dbReference type="ChEBI" id="CHEBI:29105"/>
    </ligand>
</feature>
<feature type="binding site" evidence="1">
    <location>
        <position position="212"/>
    </location>
    <ligand>
        <name>Zn(2+)</name>
        <dbReference type="ChEBI" id="CHEBI:29105"/>
    </ligand>
</feature>
<feature type="binding site" evidence="1">
    <location>
        <position position="241"/>
    </location>
    <ligand>
        <name>Zn(2+)</name>
        <dbReference type="ChEBI" id="CHEBI:29105"/>
    </ligand>
</feature>
<feature type="binding site" evidence="1">
    <location>
        <position position="244"/>
    </location>
    <ligand>
        <name>Zn(2+)</name>
        <dbReference type="ChEBI" id="CHEBI:29105"/>
    </ligand>
</feature>
<name>PNG1_ORYSJ</name>
<proteinExistence type="evidence at transcript level"/>
<protein>
    <recommendedName>
        <fullName>Peptide-N(4)-(N-acetyl-beta-glucosaminyl)asparagine amidase</fullName>
        <ecNumber>3.5.1.52</ecNumber>
    </recommendedName>
    <alternativeName>
        <fullName>Peptide:N-glycanase</fullName>
    </alternativeName>
</protein>
<accession>Q7F0R1</accession>
<accession>Q0D6A2</accession>
<reference key="1">
    <citation type="journal article" date="2005" name="Nature">
        <title>The map-based sequence of the rice genome.</title>
        <authorList>
            <consortium name="International rice genome sequencing project (IRGSP)"/>
        </authorList>
    </citation>
    <scope>NUCLEOTIDE SEQUENCE [LARGE SCALE GENOMIC DNA]</scope>
    <source>
        <strain>cv. Nipponbare</strain>
    </source>
</reference>
<reference key="2">
    <citation type="journal article" date="2008" name="Nucleic Acids Res.">
        <title>The rice annotation project database (RAP-DB): 2008 update.</title>
        <authorList>
            <consortium name="The rice annotation project (RAP)"/>
        </authorList>
    </citation>
    <scope>GENOME REANNOTATION</scope>
    <source>
        <strain>cv. Nipponbare</strain>
    </source>
</reference>
<reference key="3">
    <citation type="journal article" date="2013" name="Rice">
        <title>Improvement of the Oryza sativa Nipponbare reference genome using next generation sequence and optical map data.</title>
        <authorList>
            <person name="Kawahara Y."/>
            <person name="de la Bastide M."/>
            <person name="Hamilton J.P."/>
            <person name="Kanamori H."/>
            <person name="McCombie W.R."/>
            <person name="Ouyang S."/>
            <person name="Schwartz D.C."/>
            <person name="Tanaka T."/>
            <person name="Wu J."/>
            <person name="Zhou S."/>
            <person name="Childs K.L."/>
            <person name="Davidson R.M."/>
            <person name="Lin H."/>
            <person name="Quesada-Ocampo L."/>
            <person name="Vaillancourt B."/>
            <person name="Sakai H."/>
            <person name="Lee S.S."/>
            <person name="Kim J."/>
            <person name="Numa H."/>
            <person name="Itoh T."/>
            <person name="Buell C.R."/>
            <person name="Matsumoto T."/>
        </authorList>
    </citation>
    <scope>GENOME REANNOTATION</scope>
    <source>
        <strain>cv. Nipponbare</strain>
    </source>
</reference>
<reference key="4">
    <citation type="journal article" date="2003" name="Science">
        <title>Collection, mapping, and annotation of over 28,000 cDNA clones from japonica rice.</title>
        <authorList>
            <consortium name="The rice full-length cDNA consortium"/>
        </authorList>
    </citation>
    <scope>NUCLEOTIDE SEQUENCE [LARGE SCALE MRNA]</scope>
    <source>
        <strain>cv. Nipponbare</strain>
    </source>
</reference>
<evidence type="ECO:0000250" key="1"/>
<evidence type="ECO:0000305" key="2"/>
<gene>
    <name type="primary">PNG1</name>
    <name type="ordered locus">Os07g0497400</name>
    <name type="ordered locus">LOC_Os07g31460</name>
    <name type="ORF">OJ1197_D06.103</name>
    <name type="ORF">P0005E02.110</name>
</gene>
<dbReference type="EC" id="3.5.1.52"/>
<dbReference type="EMBL" id="AP004006">
    <property type="protein sequence ID" value="BAD30444.1"/>
    <property type="molecule type" value="Genomic_DNA"/>
</dbReference>
<dbReference type="EMBL" id="AP004259">
    <property type="protein sequence ID" value="BAC79717.1"/>
    <property type="molecule type" value="Genomic_DNA"/>
</dbReference>
<dbReference type="EMBL" id="AP008213">
    <property type="protein sequence ID" value="BAF21621.1"/>
    <property type="molecule type" value="Genomic_DNA"/>
</dbReference>
<dbReference type="EMBL" id="AP014963">
    <property type="protein sequence ID" value="BAT01614.1"/>
    <property type="molecule type" value="Genomic_DNA"/>
</dbReference>
<dbReference type="EMBL" id="AK068275">
    <property type="status" value="NOT_ANNOTATED_CDS"/>
    <property type="molecule type" value="mRNA"/>
</dbReference>
<dbReference type="SMR" id="Q7F0R1"/>
<dbReference type="FunCoup" id="Q7F0R1">
    <property type="interactions" value="224"/>
</dbReference>
<dbReference type="STRING" id="39947.Q7F0R1"/>
<dbReference type="PaxDb" id="39947-Q7F0R1"/>
<dbReference type="EnsemblPlants" id="Os07t0497400-01">
    <property type="protein sequence ID" value="Os07t0497400-01"/>
    <property type="gene ID" value="Os07g0497400"/>
</dbReference>
<dbReference type="Gramene" id="Os07t0497400-01">
    <property type="protein sequence ID" value="Os07t0497400-01"/>
    <property type="gene ID" value="Os07g0497400"/>
</dbReference>
<dbReference type="KEGG" id="dosa:Os07g0497400"/>
<dbReference type="eggNOG" id="KOG0909">
    <property type="taxonomic scope" value="Eukaryota"/>
</dbReference>
<dbReference type="HOGENOM" id="CLU_031058_0_1_1"/>
<dbReference type="InParanoid" id="Q7F0R1"/>
<dbReference type="OMA" id="YVIAITK"/>
<dbReference type="Proteomes" id="UP000000763">
    <property type="component" value="Chromosome 7"/>
</dbReference>
<dbReference type="Proteomes" id="UP000059680">
    <property type="component" value="Chromosome 7"/>
</dbReference>
<dbReference type="ExpressionAtlas" id="Q7F0R1">
    <property type="expression patterns" value="baseline and differential"/>
</dbReference>
<dbReference type="GO" id="GO:0005829">
    <property type="term" value="C:cytosol"/>
    <property type="evidence" value="ECO:0007669"/>
    <property type="project" value="EnsemblPlants"/>
</dbReference>
<dbReference type="GO" id="GO:0046872">
    <property type="term" value="F:metal ion binding"/>
    <property type="evidence" value="ECO:0007669"/>
    <property type="project" value="UniProtKB-KW"/>
</dbReference>
<dbReference type="GO" id="GO:0000224">
    <property type="term" value="F:peptide-N4-(N-acetyl-beta-glucosaminyl)asparagine amidase activity"/>
    <property type="evidence" value="ECO:0007669"/>
    <property type="project" value="UniProtKB-EC"/>
</dbReference>
<dbReference type="GO" id="GO:0010188">
    <property type="term" value="P:response to microbial phytotoxin"/>
    <property type="evidence" value="ECO:0007669"/>
    <property type="project" value="EnsemblPlants"/>
</dbReference>
<dbReference type="GO" id="GO:0010193">
    <property type="term" value="P:response to ozone"/>
    <property type="evidence" value="ECO:0007669"/>
    <property type="project" value="EnsemblPlants"/>
</dbReference>
<dbReference type="GO" id="GO:0009751">
    <property type="term" value="P:response to salicylic acid"/>
    <property type="evidence" value="ECO:0007669"/>
    <property type="project" value="EnsemblPlants"/>
</dbReference>
<dbReference type="FunFam" id="2.20.25.10:FF:000011">
    <property type="entry name" value="peptide-N(4)-(N-acetyl-beta- glucosaminyl)asparagine amidase"/>
    <property type="match status" value="1"/>
</dbReference>
<dbReference type="Gene3D" id="2.20.25.10">
    <property type="match status" value="1"/>
</dbReference>
<dbReference type="Gene3D" id="3.10.620.30">
    <property type="match status" value="1"/>
</dbReference>
<dbReference type="InterPro" id="IPR038765">
    <property type="entry name" value="Papain-like_cys_pep_sf"/>
</dbReference>
<dbReference type="InterPro" id="IPR050883">
    <property type="entry name" value="PNGase"/>
</dbReference>
<dbReference type="InterPro" id="IPR002931">
    <property type="entry name" value="Transglutaminase-like"/>
</dbReference>
<dbReference type="PANTHER" id="PTHR12143">
    <property type="entry name" value="PEPTIDE N-GLYCANASE PNGASE -RELATED"/>
    <property type="match status" value="1"/>
</dbReference>
<dbReference type="PANTHER" id="PTHR12143:SF19">
    <property type="entry name" value="PEPTIDE-N(4)-(N-ACETYL-BETA-GLUCOSAMINYL)ASPARAGINE AMIDASE"/>
    <property type="match status" value="1"/>
</dbReference>
<dbReference type="Pfam" id="PF01841">
    <property type="entry name" value="Transglut_core"/>
    <property type="match status" value="1"/>
</dbReference>
<dbReference type="SMART" id="SM00460">
    <property type="entry name" value="TGc"/>
    <property type="match status" value="1"/>
</dbReference>
<dbReference type="SUPFAM" id="SSF54001">
    <property type="entry name" value="Cysteine proteinases"/>
    <property type="match status" value="1"/>
</dbReference>